<gene>
    <name type="ordered locus">Rv2366c</name>
    <name type="ORF">MTCY27.14</name>
</gene>
<comment type="subcellular location">
    <subcellularLocation>
        <location evidence="4">Cell membrane</location>
        <topology evidence="4">Multi-pass membrane protein</topology>
    </subcellularLocation>
</comment>
<comment type="similarity">
    <text evidence="4">Belongs to the UPF0053 family.</text>
</comment>
<protein>
    <recommendedName>
        <fullName>UPF0053 protein Rv2366c</fullName>
    </recommendedName>
</protein>
<sequence length="435" mass="47213">MTGYYQLLGSIVLIGLGGLFAAIDAAISTVSPARVDELVRDQRPGAGSLRKVMADRPRYVNLVVLLRTSCEITATALLVVFIRYHFSMVWGLYLAAGIMVLASFVVVGVGPRTLGRQNAYSISLATALPLRLISWLLMPISRLLVLLGNALTPGRGFRNGPFASEIELREVVDLAQQRGVVAADERRMIESVFELGDTPAREVMVPRTEMIWIESDKTAGQAMTLAVRSGHSRIPVIGENVDDIVGVVYLKDLVEQTFCSTNGGRETTVARVMRPAVFVPDSKPLDALLREMQRDRNHMALLVDEYGAIAGLVSIEDVLEEIVGEIADEYDQAETAPVEDLGDKRFRVSARLPIEDVGELYGVEFDDDLDVDTVGGLLALELGRVPLPGAEVISHGLRLHAEGGTDHRGRVRIGTVLLSPAEPDGADDEEADHPG</sequence>
<feature type="chain" id="PRO_0000088381" description="UPF0053 protein Rv2366c">
    <location>
        <begin position="1"/>
        <end position="435"/>
    </location>
</feature>
<feature type="transmembrane region" description="Helical" evidence="1">
    <location>
        <begin position="7"/>
        <end position="27"/>
    </location>
</feature>
<feature type="transmembrane region" description="Helical" evidence="1">
    <location>
        <begin position="89"/>
        <end position="109"/>
    </location>
</feature>
<feature type="domain" description="CNNM transmembrane" evidence="3">
    <location>
        <begin position="1"/>
        <end position="185"/>
    </location>
</feature>
<feature type="domain" description="CBS 1" evidence="2">
    <location>
        <begin position="204"/>
        <end position="267"/>
    </location>
</feature>
<feature type="domain" description="CBS 2" evidence="2">
    <location>
        <begin position="272"/>
        <end position="329"/>
    </location>
</feature>
<proteinExistence type="evidence at protein level"/>
<name>Y2366_MYCTU</name>
<organism>
    <name type="scientific">Mycobacterium tuberculosis (strain ATCC 25618 / H37Rv)</name>
    <dbReference type="NCBI Taxonomy" id="83332"/>
    <lineage>
        <taxon>Bacteria</taxon>
        <taxon>Bacillati</taxon>
        <taxon>Actinomycetota</taxon>
        <taxon>Actinomycetes</taxon>
        <taxon>Mycobacteriales</taxon>
        <taxon>Mycobacteriaceae</taxon>
        <taxon>Mycobacterium</taxon>
        <taxon>Mycobacterium tuberculosis complex</taxon>
    </lineage>
</organism>
<accession>P9WFP1</accession>
<accession>L0T9E9</accession>
<accession>O05832</accession>
<accession>P67130</accession>
<evidence type="ECO:0000255" key="1"/>
<evidence type="ECO:0000255" key="2">
    <source>
        <dbReference type="PROSITE-ProRule" id="PRU00703"/>
    </source>
</evidence>
<evidence type="ECO:0000255" key="3">
    <source>
        <dbReference type="PROSITE-ProRule" id="PRU01193"/>
    </source>
</evidence>
<evidence type="ECO:0000305" key="4"/>
<reference key="1">
    <citation type="journal article" date="1998" name="Nature">
        <title>Deciphering the biology of Mycobacterium tuberculosis from the complete genome sequence.</title>
        <authorList>
            <person name="Cole S.T."/>
            <person name="Brosch R."/>
            <person name="Parkhill J."/>
            <person name="Garnier T."/>
            <person name="Churcher C.M."/>
            <person name="Harris D.E."/>
            <person name="Gordon S.V."/>
            <person name="Eiglmeier K."/>
            <person name="Gas S."/>
            <person name="Barry C.E. III"/>
            <person name="Tekaia F."/>
            <person name="Badcock K."/>
            <person name="Basham D."/>
            <person name="Brown D."/>
            <person name="Chillingworth T."/>
            <person name="Connor R."/>
            <person name="Davies R.M."/>
            <person name="Devlin K."/>
            <person name="Feltwell T."/>
            <person name="Gentles S."/>
            <person name="Hamlin N."/>
            <person name="Holroyd S."/>
            <person name="Hornsby T."/>
            <person name="Jagels K."/>
            <person name="Krogh A."/>
            <person name="McLean J."/>
            <person name="Moule S."/>
            <person name="Murphy L.D."/>
            <person name="Oliver S."/>
            <person name="Osborne J."/>
            <person name="Quail M.A."/>
            <person name="Rajandream M.A."/>
            <person name="Rogers J."/>
            <person name="Rutter S."/>
            <person name="Seeger K."/>
            <person name="Skelton S."/>
            <person name="Squares S."/>
            <person name="Squares R."/>
            <person name="Sulston J.E."/>
            <person name="Taylor K."/>
            <person name="Whitehead S."/>
            <person name="Barrell B.G."/>
        </authorList>
    </citation>
    <scope>NUCLEOTIDE SEQUENCE [LARGE SCALE GENOMIC DNA]</scope>
    <source>
        <strain>ATCC 25618 / H37Rv</strain>
    </source>
</reference>
<reference key="2">
    <citation type="journal article" date="2011" name="Mol. Cell. Proteomics">
        <title>Proteogenomic analysis of Mycobacterium tuberculosis by high resolution mass spectrometry.</title>
        <authorList>
            <person name="Kelkar D.S."/>
            <person name="Kumar D."/>
            <person name="Kumar P."/>
            <person name="Balakrishnan L."/>
            <person name="Muthusamy B."/>
            <person name="Yadav A.K."/>
            <person name="Shrivastava P."/>
            <person name="Marimuthu A."/>
            <person name="Anand S."/>
            <person name="Sundaram H."/>
            <person name="Kingsbury R."/>
            <person name="Harsha H.C."/>
            <person name="Nair B."/>
            <person name="Prasad T.S."/>
            <person name="Chauhan D.S."/>
            <person name="Katoch K."/>
            <person name="Katoch V.M."/>
            <person name="Kumar P."/>
            <person name="Chaerkady R."/>
            <person name="Ramachandran S."/>
            <person name="Dash D."/>
            <person name="Pandey A."/>
        </authorList>
    </citation>
    <scope>IDENTIFICATION BY MASS SPECTROMETRY [LARGE SCALE ANALYSIS]</scope>
    <source>
        <strain>ATCC 25618 / H37Rv</strain>
    </source>
</reference>
<keyword id="KW-0129">CBS domain</keyword>
<keyword id="KW-1003">Cell membrane</keyword>
<keyword id="KW-0472">Membrane</keyword>
<keyword id="KW-1185">Reference proteome</keyword>
<keyword id="KW-0677">Repeat</keyword>
<keyword id="KW-0812">Transmembrane</keyword>
<keyword id="KW-1133">Transmembrane helix</keyword>
<dbReference type="EMBL" id="AL123456">
    <property type="protein sequence ID" value="CCP45154.1"/>
    <property type="molecule type" value="Genomic_DNA"/>
</dbReference>
<dbReference type="PIR" id="E70586">
    <property type="entry name" value="E70586"/>
</dbReference>
<dbReference type="RefSeq" id="NP_216882.1">
    <property type="nucleotide sequence ID" value="NC_000962.3"/>
</dbReference>
<dbReference type="RefSeq" id="WP_003412229.1">
    <property type="nucleotide sequence ID" value="NZ_NVQJ01000029.1"/>
</dbReference>
<dbReference type="SMR" id="P9WFP1"/>
<dbReference type="FunCoup" id="P9WFP1">
    <property type="interactions" value="141"/>
</dbReference>
<dbReference type="STRING" id="83332.Rv2366c"/>
<dbReference type="PaxDb" id="83332-Rv2366c"/>
<dbReference type="DNASU" id="885987"/>
<dbReference type="GeneID" id="885987"/>
<dbReference type="KEGG" id="mtu:Rv2366c"/>
<dbReference type="KEGG" id="mtv:RVBD_2366c"/>
<dbReference type="TubercuList" id="Rv2366c"/>
<dbReference type="eggNOG" id="COG1253">
    <property type="taxonomic scope" value="Bacteria"/>
</dbReference>
<dbReference type="InParanoid" id="P9WFP1"/>
<dbReference type="OrthoDB" id="110231at2"/>
<dbReference type="PhylomeDB" id="P9WFP1"/>
<dbReference type="Proteomes" id="UP000001584">
    <property type="component" value="Chromosome"/>
</dbReference>
<dbReference type="GO" id="GO:0005886">
    <property type="term" value="C:plasma membrane"/>
    <property type="evidence" value="ECO:0007005"/>
    <property type="project" value="MTBBASE"/>
</dbReference>
<dbReference type="GO" id="GO:0050660">
    <property type="term" value="F:flavin adenine dinucleotide binding"/>
    <property type="evidence" value="ECO:0007669"/>
    <property type="project" value="InterPro"/>
</dbReference>
<dbReference type="CDD" id="cd04590">
    <property type="entry name" value="CBS_pair_CorC_HlyC_assoc"/>
    <property type="match status" value="1"/>
</dbReference>
<dbReference type="FunFam" id="3.30.465.10:FF:000020">
    <property type="entry name" value="HlyC/CorC family transporter"/>
    <property type="match status" value="1"/>
</dbReference>
<dbReference type="FunFam" id="3.10.580.10:FF:000002">
    <property type="entry name" value="Magnesium/cobalt efflux protein CorC"/>
    <property type="match status" value="1"/>
</dbReference>
<dbReference type="Gene3D" id="3.30.465.10">
    <property type="match status" value="1"/>
</dbReference>
<dbReference type="Gene3D" id="3.10.580.10">
    <property type="entry name" value="CBS-domain"/>
    <property type="match status" value="1"/>
</dbReference>
<dbReference type="InterPro" id="IPR000644">
    <property type="entry name" value="CBS_dom"/>
</dbReference>
<dbReference type="InterPro" id="IPR046342">
    <property type="entry name" value="CBS_dom_sf"/>
</dbReference>
<dbReference type="InterPro" id="IPR002550">
    <property type="entry name" value="CNNM"/>
</dbReference>
<dbReference type="InterPro" id="IPR036318">
    <property type="entry name" value="FAD-bd_PCMH-like_sf"/>
</dbReference>
<dbReference type="InterPro" id="IPR016169">
    <property type="entry name" value="FAD-bd_PCMH_sub2"/>
</dbReference>
<dbReference type="InterPro" id="IPR044751">
    <property type="entry name" value="Ion_transp-like_CBS"/>
</dbReference>
<dbReference type="InterPro" id="IPR005170">
    <property type="entry name" value="Transptr-assoc_dom"/>
</dbReference>
<dbReference type="PANTHER" id="PTHR22777">
    <property type="entry name" value="HEMOLYSIN-RELATED"/>
    <property type="match status" value="1"/>
</dbReference>
<dbReference type="PANTHER" id="PTHR22777:SF32">
    <property type="entry name" value="UPF0053 INNER MEMBRANE PROTEIN YFJD"/>
    <property type="match status" value="1"/>
</dbReference>
<dbReference type="Pfam" id="PF00571">
    <property type="entry name" value="CBS"/>
    <property type="match status" value="2"/>
</dbReference>
<dbReference type="Pfam" id="PF01595">
    <property type="entry name" value="CNNM"/>
    <property type="match status" value="1"/>
</dbReference>
<dbReference type="Pfam" id="PF03471">
    <property type="entry name" value="CorC_HlyC"/>
    <property type="match status" value="1"/>
</dbReference>
<dbReference type="SMART" id="SM00116">
    <property type="entry name" value="CBS"/>
    <property type="match status" value="2"/>
</dbReference>
<dbReference type="SMART" id="SM01091">
    <property type="entry name" value="CorC_HlyC"/>
    <property type="match status" value="1"/>
</dbReference>
<dbReference type="SUPFAM" id="SSF54631">
    <property type="entry name" value="CBS-domain pair"/>
    <property type="match status" value="1"/>
</dbReference>
<dbReference type="SUPFAM" id="SSF56176">
    <property type="entry name" value="FAD-binding/transporter-associated domain-like"/>
    <property type="match status" value="1"/>
</dbReference>
<dbReference type="PROSITE" id="PS51371">
    <property type="entry name" value="CBS"/>
    <property type="match status" value="2"/>
</dbReference>
<dbReference type="PROSITE" id="PS51846">
    <property type="entry name" value="CNNM"/>
    <property type="match status" value="1"/>
</dbReference>